<protein>
    <recommendedName>
        <fullName>Uncharacterized protein C1orf54</fullName>
    </recommendedName>
</protein>
<gene>
    <name type="primary">C1orf54</name>
</gene>
<organism>
    <name type="scientific">Homo sapiens</name>
    <name type="common">Human</name>
    <dbReference type="NCBI Taxonomy" id="9606"/>
    <lineage>
        <taxon>Eukaryota</taxon>
        <taxon>Metazoa</taxon>
        <taxon>Chordata</taxon>
        <taxon>Craniata</taxon>
        <taxon>Vertebrata</taxon>
        <taxon>Euteleostomi</taxon>
        <taxon>Mammalia</taxon>
        <taxon>Eutheria</taxon>
        <taxon>Euarchontoglires</taxon>
        <taxon>Primates</taxon>
        <taxon>Haplorrhini</taxon>
        <taxon>Catarrhini</taxon>
        <taxon>Hominidae</taxon>
        <taxon>Homo</taxon>
    </lineage>
</organism>
<evidence type="ECO:0000255" key="1"/>
<evidence type="ECO:0000305" key="2"/>
<proteinExistence type="evidence at protein level"/>
<accession>Q8WWF1</accession>
<accession>Q9H5P3</accession>
<dbReference type="EMBL" id="AK026874">
    <property type="protein sequence ID" value="BAB15579.1"/>
    <property type="molecule type" value="mRNA"/>
</dbReference>
<dbReference type="EMBL" id="AM392820">
    <property type="protein sequence ID" value="CAL37698.1"/>
    <property type="molecule type" value="mRNA"/>
</dbReference>
<dbReference type="EMBL" id="AM392958">
    <property type="protein sequence ID" value="CAL37836.1"/>
    <property type="molecule type" value="mRNA"/>
</dbReference>
<dbReference type="EMBL" id="AM393066">
    <property type="protein sequence ID" value="CAL37944.1"/>
    <property type="molecule type" value="mRNA"/>
</dbReference>
<dbReference type="EMBL" id="AM393249">
    <property type="protein sequence ID" value="CAL38127.1"/>
    <property type="molecule type" value="mRNA"/>
</dbReference>
<dbReference type="EMBL" id="AM393548">
    <property type="protein sequence ID" value="CAL38425.1"/>
    <property type="molecule type" value="mRNA"/>
</dbReference>
<dbReference type="EMBL" id="AM393619">
    <property type="protein sequence ID" value="CAL38495.1"/>
    <property type="molecule type" value="mRNA"/>
</dbReference>
<dbReference type="EMBL" id="AL138795">
    <property type="protein sequence ID" value="CAI22814.1"/>
    <property type="molecule type" value="Genomic_DNA"/>
</dbReference>
<dbReference type="EMBL" id="BC017761">
    <property type="protein sequence ID" value="AAH17761.1"/>
    <property type="molecule type" value="mRNA"/>
</dbReference>
<dbReference type="CCDS" id="CCDS948.1"/>
<dbReference type="RefSeq" id="NP_001287969.1">
    <property type="nucleotide sequence ID" value="NM_001301040.1"/>
</dbReference>
<dbReference type="RefSeq" id="NP_078855.2">
    <property type="nucleotide sequence ID" value="NM_024579.4"/>
</dbReference>
<dbReference type="RefSeq" id="XP_047286411.1">
    <property type="nucleotide sequence ID" value="XM_047430455.1"/>
</dbReference>
<dbReference type="RefSeq" id="XP_054194711.1">
    <property type="nucleotide sequence ID" value="XM_054338736.1"/>
</dbReference>
<dbReference type="BioGRID" id="122760">
    <property type="interactions" value="181"/>
</dbReference>
<dbReference type="FunCoup" id="Q8WWF1">
    <property type="interactions" value="3"/>
</dbReference>
<dbReference type="IntAct" id="Q8WWF1">
    <property type="interactions" value="166"/>
</dbReference>
<dbReference type="STRING" id="9606.ENSP00000358098"/>
<dbReference type="GlyCosmos" id="Q8WWF1">
    <property type="glycosylation" value="1 site, 1 glycan"/>
</dbReference>
<dbReference type="GlyGen" id="Q8WWF1">
    <property type="glycosylation" value="3 sites, 2 O-linked glycans (2 sites)"/>
</dbReference>
<dbReference type="iPTMnet" id="Q8WWF1"/>
<dbReference type="PhosphoSitePlus" id="Q8WWF1"/>
<dbReference type="BioMuta" id="C1orf54"/>
<dbReference type="MassIVE" id="Q8WWF1"/>
<dbReference type="PaxDb" id="9606-ENSP00000358098"/>
<dbReference type="PeptideAtlas" id="Q8WWF1"/>
<dbReference type="Antibodypedia" id="20279">
    <property type="antibodies" value="69 antibodies from 11 providers"/>
</dbReference>
<dbReference type="DNASU" id="79630"/>
<dbReference type="Ensembl" id="ENST00000369099.8">
    <property type="protein sequence ID" value="ENSP00000358095.3"/>
    <property type="gene ID" value="ENSG00000118292.9"/>
</dbReference>
<dbReference type="Ensembl" id="ENST00000369102.5">
    <property type="protein sequence ID" value="ENSP00000358098.1"/>
    <property type="gene ID" value="ENSG00000118292.9"/>
</dbReference>
<dbReference type="GeneID" id="79630"/>
<dbReference type="KEGG" id="hsa:79630"/>
<dbReference type="MANE-Select" id="ENST00000369099.8">
    <property type="protein sequence ID" value="ENSP00000358095.3"/>
    <property type="RefSeq nucleotide sequence ID" value="NM_024579.4"/>
    <property type="RefSeq protein sequence ID" value="NP_078855.2"/>
</dbReference>
<dbReference type="UCSC" id="uc001eud.4">
    <property type="organism name" value="human"/>
</dbReference>
<dbReference type="AGR" id="HGNC:26258"/>
<dbReference type="CTD" id="79630"/>
<dbReference type="DisGeNET" id="79630"/>
<dbReference type="GeneCards" id="C1orf54"/>
<dbReference type="HGNC" id="HGNC:26258">
    <property type="gene designation" value="C1orf54"/>
</dbReference>
<dbReference type="HPA" id="ENSG00000118292">
    <property type="expression patterns" value="Low tissue specificity"/>
</dbReference>
<dbReference type="neXtProt" id="NX_Q8WWF1"/>
<dbReference type="OpenTargets" id="ENSG00000118292"/>
<dbReference type="PharmGKB" id="PA142672505"/>
<dbReference type="VEuPathDB" id="HostDB:ENSG00000118292"/>
<dbReference type="eggNOG" id="ENOG502RVU7">
    <property type="taxonomic scope" value="Eukaryota"/>
</dbReference>
<dbReference type="GeneTree" id="ENSGT00390000003103"/>
<dbReference type="HOGENOM" id="CLU_130480_0_0_1"/>
<dbReference type="InParanoid" id="Q8WWF1"/>
<dbReference type="OMA" id="MTVEPQS"/>
<dbReference type="OrthoDB" id="9834409at2759"/>
<dbReference type="PAN-GO" id="Q8WWF1">
    <property type="GO annotations" value="0 GO annotations based on evolutionary models"/>
</dbReference>
<dbReference type="PhylomeDB" id="Q8WWF1"/>
<dbReference type="TreeFam" id="TF336874"/>
<dbReference type="PathwayCommons" id="Q8WWF1"/>
<dbReference type="BioGRID-ORCS" id="79630">
    <property type="hits" value="12 hits in 1138 CRISPR screens"/>
</dbReference>
<dbReference type="GenomeRNAi" id="79630"/>
<dbReference type="Pharos" id="Q8WWF1">
    <property type="development level" value="Tdark"/>
</dbReference>
<dbReference type="PRO" id="PR:Q8WWF1"/>
<dbReference type="Proteomes" id="UP000005640">
    <property type="component" value="Chromosome 1"/>
</dbReference>
<dbReference type="RNAct" id="Q8WWF1">
    <property type="molecule type" value="protein"/>
</dbReference>
<dbReference type="Bgee" id="ENSG00000118292">
    <property type="expression patterns" value="Expressed in periodontal ligament and 187 other cell types or tissues"/>
</dbReference>
<dbReference type="ExpressionAtlas" id="Q8WWF1">
    <property type="expression patterns" value="baseline and differential"/>
</dbReference>
<dbReference type="GO" id="GO:0005576">
    <property type="term" value="C:extracellular region"/>
    <property type="evidence" value="ECO:0007669"/>
    <property type="project" value="UniProtKB-SubCell"/>
</dbReference>
<dbReference type="GO" id="GO:2001013">
    <property type="term" value="P:epithelial cell proliferation involved in renal tubule morphogenesis"/>
    <property type="evidence" value="ECO:0007669"/>
    <property type="project" value="Ensembl"/>
</dbReference>
<dbReference type="GO" id="GO:0043491">
    <property type="term" value="P:phosphatidylinositol 3-kinase/protein kinase B signal transduction"/>
    <property type="evidence" value="ECO:0007669"/>
    <property type="project" value="Ensembl"/>
</dbReference>
<dbReference type="GO" id="GO:0009611">
    <property type="term" value="P:response to wounding"/>
    <property type="evidence" value="ECO:0007669"/>
    <property type="project" value="Ensembl"/>
</dbReference>
<dbReference type="InterPro" id="IPR027957">
    <property type="entry name" value="DUF4634"/>
</dbReference>
<dbReference type="PANTHER" id="PTHR37870">
    <property type="entry name" value="CHROMOSOME 1 OPEN READING FRAME 54"/>
    <property type="match status" value="1"/>
</dbReference>
<dbReference type="PANTHER" id="PTHR37870:SF1">
    <property type="entry name" value="CHROMOSOME 2 C1ORF54 HOMOLOG"/>
    <property type="match status" value="1"/>
</dbReference>
<dbReference type="Pfam" id="PF15465">
    <property type="entry name" value="DUF4634"/>
    <property type="match status" value="1"/>
</dbReference>
<comment type="subcellular location">
    <subcellularLocation>
        <location evidence="2">Secreted</location>
    </subcellularLocation>
</comment>
<feature type="signal peptide" evidence="1">
    <location>
        <begin position="1"/>
        <end position="16"/>
    </location>
</feature>
<feature type="chain" id="PRO_0000251200" description="Uncharacterized protein C1orf54">
    <location>
        <begin position="17"/>
        <end position="131"/>
    </location>
</feature>
<feature type="sequence conflict" description="In Ref. 1; BAB15579." evidence="2" ref="1">
    <original>C</original>
    <variation>R</variation>
    <location>
        <position position="121"/>
    </location>
</feature>
<keyword id="KW-1267">Proteomics identification</keyword>
<keyword id="KW-1185">Reference proteome</keyword>
<keyword id="KW-0964">Secreted</keyword>
<keyword id="KW-0732">Signal</keyword>
<sequence>MDVLFVAIFAVPLILGQEYEDEERLGEDEYYQVVYYYTVTPSYDDFSADFTIDYSIFESEDRLNRLDKDITEAIETTISLETARADHPKPVTVKPVTTEPSPDLNDAVSSLRSPIPLLLSCAFVQVGMYFM</sequence>
<reference key="1">
    <citation type="journal article" date="2004" name="Nat. Genet.">
        <title>Complete sequencing and characterization of 21,243 full-length human cDNAs.</title>
        <authorList>
            <person name="Ota T."/>
            <person name="Suzuki Y."/>
            <person name="Nishikawa T."/>
            <person name="Otsuki T."/>
            <person name="Sugiyama T."/>
            <person name="Irie R."/>
            <person name="Wakamatsu A."/>
            <person name="Hayashi K."/>
            <person name="Sato H."/>
            <person name="Nagai K."/>
            <person name="Kimura K."/>
            <person name="Makita H."/>
            <person name="Sekine M."/>
            <person name="Obayashi M."/>
            <person name="Nishi T."/>
            <person name="Shibahara T."/>
            <person name="Tanaka T."/>
            <person name="Ishii S."/>
            <person name="Yamamoto J."/>
            <person name="Saito K."/>
            <person name="Kawai Y."/>
            <person name="Isono Y."/>
            <person name="Nakamura Y."/>
            <person name="Nagahari K."/>
            <person name="Murakami K."/>
            <person name="Yasuda T."/>
            <person name="Iwayanagi T."/>
            <person name="Wagatsuma M."/>
            <person name="Shiratori A."/>
            <person name="Sudo H."/>
            <person name="Hosoiri T."/>
            <person name="Kaku Y."/>
            <person name="Kodaira H."/>
            <person name="Kondo H."/>
            <person name="Sugawara M."/>
            <person name="Takahashi M."/>
            <person name="Kanda K."/>
            <person name="Yokoi T."/>
            <person name="Furuya T."/>
            <person name="Kikkawa E."/>
            <person name="Omura Y."/>
            <person name="Abe K."/>
            <person name="Kamihara K."/>
            <person name="Katsuta N."/>
            <person name="Sato K."/>
            <person name="Tanikawa M."/>
            <person name="Yamazaki M."/>
            <person name="Ninomiya K."/>
            <person name="Ishibashi T."/>
            <person name="Yamashita H."/>
            <person name="Murakawa K."/>
            <person name="Fujimori K."/>
            <person name="Tanai H."/>
            <person name="Kimata M."/>
            <person name="Watanabe M."/>
            <person name="Hiraoka S."/>
            <person name="Chiba Y."/>
            <person name="Ishida S."/>
            <person name="Ono Y."/>
            <person name="Takiguchi S."/>
            <person name="Watanabe S."/>
            <person name="Yosida M."/>
            <person name="Hotuta T."/>
            <person name="Kusano J."/>
            <person name="Kanehori K."/>
            <person name="Takahashi-Fujii A."/>
            <person name="Hara H."/>
            <person name="Tanase T.-O."/>
            <person name="Nomura Y."/>
            <person name="Togiya S."/>
            <person name="Komai F."/>
            <person name="Hara R."/>
            <person name="Takeuchi K."/>
            <person name="Arita M."/>
            <person name="Imose N."/>
            <person name="Musashino K."/>
            <person name="Yuuki H."/>
            <person name="Oshima A."/>
            <person name="Sasaki N."/>
            <person name="Aotsuka S."/>
            <person name="Yoshikawa Y."/>
            <person name="Matsunawa H."/>
            <person name="Ichihara T."/>
            <person name="Shiohata N."/>
            <person name="Sano S."/>
            <person name="Moriya S."/>
            <person name="Momiyama H."/>
            <person name="Satoh N."/>
            <person name="Takami S."/>
            <person name="Terashima Y."/>
            <person name="Suzuki O."/>
            <person name="Nakagawa S."/>
            <person name="Senoh A."/>
            <person name="Mizoguchi H."/>
            <person name="Goto Y."/>
            <person name="Shimizu F."/>
            <person name="Wakebe H."/>
            <person name="Hishigaki H."/>
            <person name="Watanabe T."/>
            <person name="Sugiyama A."/>
            <person name="Takemoto M."/>
            <person name="Kawakami B."/>
            <person name="Yamazaki M."/>
            <person name="Watanabe K."/>
            <person name="Kumagai A."/>
            <person name="Itakura S."/>
            <person name="Fukuzumi Y."/>
            <person name="Fujimori Y."/>
            <person name="Komiyama M."/>
            <person name="Tashiro H."/>
            <person name="Tanigami A."/>
            <person name="Fujiwara T."/>
            <person name="Ono T."/>
            <person name="Yamada K."/>
            <person name="Fujii Y."/>
            <person name="Ozaki K."/>
            <person name="Hirao M."/>
            <person name="Ohmori Y."/>
            <person name="Kawabata A."/>
            <person name="Hikiji T."/>
            <person name="Kobatake N."/>
            <person name="Inagaki H."/>
            <person name="Ikema Y."/>
            <person name="Okamoto S."/>
            <person name="Okitani R."/>
            <person name="Kawakami T."/>
            <person name="Noguchi S."/>
            <person name="Itoh T."/>
            <person name="Shigeta K."/>
            <person name="Senba T."/>
            <person name="Matsumura K."/>
            <person name="Nakajima Y."/>
            <person name="Mizuno T."/>
            <person name="Morinaga M."/>
            <person name="Sasaki M."/>
            <person name="Togashi T."/>
            <person name="Oyama M."/>
            <person name="Hata H."/>
            <person name="Watanabe M."/>
            <person name="Komatsu T."/>
            <person name="Mizushima-Sugano J."/>
            <person name="Satoh T."/>
            <person name="Shirai Y."/>
            <person name="Takahashi Y."/>
            <person name="Nakagawa K."/>
            <person name="Okumura K."/>
            <person name="Nagase T."/>
            <person name="Nomura N."/>
            <person name="Kikuchi H."/>
            <person name="Masuho Y."/>
            <person name="Yamashita R."/>
            <person name="Nakai K."/>
            <person name="Yada T."/>
            <person name="Nakamura Y."/>
            <person name="Ohara O."/>
            <person name="Isogai T."/>
            <person name="Sugano S."/>
        </authorList>
    </citation>
    <scope>NUCLEOTIDE SEQUENCE [LARGE SCALE MRNA]</scope>
    <source>
        <tissue>Adipose tissue</tissue>
    </source>
</reference>
<reference key="2">
    <citation type="journal article" date="2007" name="BMC Genomics">
        <title>The full-ORF clone resource of the German cDNA consortium.</title>
        <authorList>
            <person name="Bechtel S."/>
            <person name="Rosenfelder H."/>
            <person name="Duda A."/>
            <person name="Schmidt C.P."/>
            <person name="Ernst U."/>
            <person name="Wellenreuther R."/>
            <person name="Mehrle A."/>
            <person name="Schuster C."/>
            <person name="Bahr A."/>
            <person name="Bloecker H."/>
            <person name="Heubner D."/>
            <person name="Hoerlein A."/>
            <person name="Michel G."/>
            <person name="Wedler H."/>
            <person name="Koehrer K."/>
            <person name="Ottenwaelder B."/>
            <person name="Poustka A."/>
            <person name="Wiemann S."/>
            <person name="Schupp I."/>
        </authorList>
    </citation>
    <scope>NUCLEOTIDE SEQUENCE [LARGE SCALE MRNA]</scope>
</reference>
<reference key="3">
    <citation type="journal article" date="2006" name="Nature">
        <title>The DNA sequence and biological annotation of human chromosome 1.</title>
        <authorList>
            <person name="Gregory S.G."/>
            <person name="Barlow K.F."/>
            <person name="McLay K.E."/>
            <person name="Kaul R."/>
            <person name="Swarbreck D."/>
            <person name="Dunham A."/>
            <person name="Scott C.E."/>
            <person name="Howe K.L."/>
            <person name="Woodfine K."/>
            <person name="Spencer C.C.A."/>
            <person name="Jones M.C."/>
            <person name="Gillson C."/>
            <person name="Searle S."/>
            <person name="Zhou Y."/>
            <person name="Kokocinski F."/>
            <person name="McDonald L."/>
            <person name="Evans R."/>
            <person name="Phillips K."/>
            <person name="Atkinson A."/>
            <person name="Cooper R."/>
            <person name="Jones C."/>
            <person name="Hall R.E."/>
            <person name="Andrews T.D."/>
            <person name="Lloyd C."/>
            <person name="Ainscough R."/>
            <person name="Almeida J.P."/>
            <person name="Ambrose K.D."/>
            <person name="Anderson F."/>
            <person name="Andrew R.W."/>
            <person name="Ashwell R.I.S."/>
            <person name="Aubin K."/>
            <person name="Babbage A.K."/>
            <person name="Bagguley C.L."/>
            <person name="Bailey J."/>
            <person name="Beasley H."/>
            <person name="Bethel G."/>
            <person name="Bird C.P."/>
            <person name="Bray-Allen S."/>
            <person name="Brown J.Y."/>
            <person name="Brown A.J."/>
            <person name="Buckley D."/>
            <person name="Burton J."/>
            <person name="Bye J."/>
            <person name="Carder C."/>
            <person name="Chapman J.C."/>
            <person name="Clark S.Y."/>
            <person name="Clarke G."/>
            <person name="Clee C."/>
            <person name="Cobley V."/>
            <person name="Collier R.E."/>
            <person name="Corby N."/>
            <person name="Coville G.J."/>
            <person name="Davies J."/>
            <person name="Deadman R."/>
            <person name="Dunn M."/>
            <person name="Earthrowl M."/>
            <person name="Ellington A.G."/>
            <person name="Errington H."/>
            <person name="Frankish A."/>
            <person name="Frankland J."/>
            <person name="French L."/>
            <person name="Garner P."/>
            <person name="Garnett J."/>
            <person name="Gay L."/>
            <person name="Ghori M.R.J."/>
            <person name="Gibson R."/>
            <person name="Gilby L.M."/>
            <person name="Gillett W."/>
            <person name="Glithero R.J."/>
            <person name="Grafham D.V."/>
            <person name="Griffiths C."/>
            <person name="Griffiths-Jones S."/>
            <person name="Grocock R."/>
            <person name="Hammond S."/>
            <person name="Harrison E.S.I."/>
            <person name="Hart E."/>
            <person name="Haugen E."/>
            <person name="Heath P.D."/>
            <person name="Holmes S."/>
            <person name="Holt K."/>
            <person name="Howden P.J."/>
            <person name="Hunt A.R."/>
            <person name="Hunt S.E."/>
            <person name="Hunter G."/>
            <person name="Isherwood J."/>
            <person name="James R."/>
            <person name="Johnson C."/>
            <person name="Johnson D."/>
            <person name="Joy A."/>
            <person name="Kay M."/>
            <person name="Kershaw J.K."/>
            <person name="Kibukawa M."/>
            <person name="Kimberley A.M."/>
            <person name="King A."/>
            <person name="Knights A.J."/>
            <person name="Lad H."/>
            <person name="Laird G."/>
            <person name="Lawlor S."/>
            <person name="Leongamornlert D.A."/>
            <person name="Lloyd D.M."/>
            <person name="Loveland J."/>
            <person name="Lovell J."/>
            <person name="Lush M.J."/>
            <person name="Lyne R."/>
            <person name="Martin S."/>
            <person name="Mashreghi-Mohammadi M."/>
            <person name="Matthews L."/>
            <person name="Matthews N.S.W."/>
            <person name="McLaren S."/>
            <person name="Milne S."/>
            <person name="Mistry S."/>
            <person name="Moore M.J.F."/>
            <person name="Nickerson T."/>
            <person name="O'Dell C.N."/>
            <person name="Oliver K."/>
            <person name="Palmeiri A."/>
            <person name="Palmer S.A."/>
            <person name="Parker A."/>
            <person name="Patel D."/>
            <person name="Pearce A.V."/>
            <person name="Peck A.I."/>
            <person name="Pelan S."/>
            <person name="Phelps K."/>
            <person name="Phillimore B.J."/>
            <person name="Plumb R."/>
            <person name="Rajan J."/>
            <person name="Raymond C."/>
            <person name="Rouse G."/>
            <person name="Saenphimmachak C."/>
            <person name="Sehra H.K."/>
            <person name="Sheridan E."/>
            <person name="Shownkeen R."/>
            <person name="Sims S."/>
            <person name="Skuce C.D."/>
            <person name="Smith M."/>
            <person name="Steward C."/>
            <person name="Subramanian S."/>
            <person name="Sycamore N."/>
            <person name="Tracey A."/>
            <person name="Tromans A."/>
            <person name="Van Helmond Z."/>
            <person name="Wall M."/>
            <person name="Wallis J.M."/>
            <person name="White S."/>
            <person name="Whitehead S.L."/>
            <person name="Wilkinson J.E."/>
            <person name="Willey D.L."/>
            <person name="Williams H."/>
            <person name="Wilming L."/>
            <person name="Wray P.W."/>
            <person name="Wu Z."/>
            <person name="Coulson A."/>
            <person name="Vaudin M."/>
            <person name="Sulston J.E."/>
            <person name="Durbin R.M."/>
            <person name="Hubbard T."/>
            <person name="Wooster R."/>
            <person name="Dunham I."/>
            <person name="Carter N.P."/>
            <person name="McVean G."/>
            <person name="Ross M.T."/>
            <person name="Harrow J."/>
            <person name="Olson M.V."/>
            <person name="Beck S."/>
            <person name="Rogers J."/>
            <person name="Bentley D.R."/>
        </authorList>
    </citation>
    <scope>NUCLEOTIDE SEQUENCE [LARGE SCALE GENOMIC DNA]</scope>
</reference>
<reference key="4">
    <citation type="journal article" date="2004" name="Genome Res.">
        <title>The status, quality, and expansion of the NIH full-length cDNA project: the Mammalian Gene Collection (MGC).</title>
        <authorList>
            <consortium name="The MGC Project Team"/>
        </authorList>
    </citation>
    <scope>NUCLEOTIDE SEQUENCE [LARGE SCALE MRNA]</scope>
    <source>
        <tissue>Lung</tissue>
    </source>
</reference>
<name>CA054_HUMAN</name>